<evidence type="ECO:0000255" key="1">
    <source>
        <dbReference type="HAMAP-Rule" id="MF_00147"/>
    </source>
</evidence>
<keyword id="KW-0963">Cytoplasm</keyword>
<keyword id="KW-0312">Gluconeogenesis</keyword>
<keyword id="KW-0324">Glycolysis</keyword>
<keyword id="KW-0413">Isomerase</keyword>
<keyword id="KW-1185">Reference proteome</keyword>
<comment type="function">
    <text evidence="1">Involved in the gluconeogenesis. Catalyzes stereospecifically the conversion of dihydroxyacetone phosphate (DHAP) to D-glyceraldehyde-3-phosphate (G3P).</text>
</comment>
<comment type="catalytic activity">
    <reaction evidence="1">
        <text>D-glyceraldehyde 3-phosphate = dihydroxyacetone phosphate</text>
        <dbReference type="Rhea" id="RHEA:18585"/>
        <dbReference type="ChEBI" id="CHEBI:57642"/>
        <dbReference type="ChEBI" id="CHEBI:59776"/>
        <dbReference type="EC" id="5.3.1.1"/>
    </reaction>
</comment>
<comment type="pathway">
    <text evidence="1">Carbohydrate biosynthesis; gluconeogenesis.</text>
</comment>
<comment type="pathway">
    <text evidence="1">Carbohydrate degradation; glycolysis; D-glyceraldehyde 3-phosphate from glycerone phosphate: step 1/1.</text>
</comment>
<comment type="subunit">
    <text evidence="1">Homodimer.</text>
</comment>
<comment type="subcellular location">
    <subcellularLocation>
        <location evidence="1">Cytoplasm</location>
    </subcellularLocation>
</comment>
<comment type="similarity">
    <text evidence="1">Belongs to the triosephosphate isomerase family.</text>
</comment>
<name>TPIS_SHEFN</name>
<organism>
    <name type="scientific">Shewanella frigidimarina (strain NCIMB 400)</name>
    <dbReference type="NCBI Taxonomy" id="318167"/>
    <lineage>
        <taxon>Bacteria</taxon>
        <taxon>Pseudomonadati</taxon>
        <taxon>Pseudomonadota</taxon>
        <taxon>Gammaproteobacteria</taxon>
        <taxon>Alteromonadales</taxon>
        <taxon>Shewanellaceae</taxon>
        <taxon>Shewanella</taxon>
    </lineage>
</organism>
<gene>
    <name evidence="1" type="primary">tpiA</name>
    <name type="ordered locus">Sfri_0986</name>
</gene>
<sequence>MALRRPMVAGNWKMNGNSALAEELFKKFATKLQNDSAEVVLCPPSIYLESVRQLLEANKQTLDGALVRMGAQNLSQHDFGAYTGEISGQMLKDSGCRYVIIGHSERRRMYGETSNIVAEKFAAAQKYGLTPILCVGESGPAREARRTFEVIAEELDIVIEKNGTMAFDNAIIAYEPLWAVGTGKSATPEQAQEVHAFIRSRLSEVSPFIGENIRILYGGSVTPSNAADIFAQPDVDGGLIGGASLNSSEFLSLCTIAMSA</sequence>
<dbReference type="EC" id="5.3.1.1" evidence="1"/>
<dbReference type="EMBL" id="CP000447">
    <property type="protein sequence ID" value="ABI70839.1"/>
    <property type="molecule type" value="Genomic_DNA"/>
</dbReference>
<dbReference type="RefSeq" id="WP_011636460.1">
    <property type="nucleotide sequence ID" value="NC_008345.1"/>
</dbReference>
<dbReference type="SMR" id="Q086H6"/>
<dbReference type="STRING" id="318167.Sfri_0986"/>
<dbReference type="KEGG" id="sfr:Sfri_0986"/>
<dbReference type="eggNOG" id="COG0149">
    <property type="taxonomic scope" value="Bacteria"/>
</dbReference>
<dbReference type="HOGENOM" id="CLU_024251_2_3_6"/>
<dbReference type="OrthoDB" id="9809429at2"/>
<dbReference type="UniPathway" id="UPA00109">
    <property type="reaction ID" value="UER00189"/>
</dbReference>
<dbReference type="UniPathway" id="UPA00138"/>
<dbReference type="Proteomes" id="UP000000684">
    <property type="component" value="Chromosome"/>
</dbReference>
<dbReference type="GO" id="GO:0005829">
    <property type="term" value="C:cytosol"/>
    <property type="evidence" value="ECO:0007669"/>
    <property type="project" value="TreeGrafter"/>
</dbReference>
<dbReference type="GO" id="GO:0004807">
    <property type="term" value="F:triose-phosphate isomerase activity"/>
    <property type="evidence" value="ECO:0007669"/>
    <property type="project" value="UniProtKB-UniRule"/>
</dbReference>
<dbReference type="GO" id="GO:0006094">
    <property type="term" value="P:gluconeogenesis"/>
    <property type="evidence" value="ECO:0007669"/>
    <property type="project" value="UniProtKB-UniRule"/>
</dbReference>
<dbReference type="GO" id="GO:0046166">
    <property type="term" value="P:glyceraldehyde-3-phosphate biosynthetic process"/>
    <property type="evidence" value="ECO:0007669"/>
    <property type="project" value="TreeGrafter"/>
</dbReference>
<dbReference type="GO" id="GO:0019563">
    <property type="term" value="P:glycerol catabolic process"/>
    <property type="evidence" value="ECO:0007669"/>
    <property type="project" value="TreeGrafter"/>
</dbReference>
<dbReference type="GO" id="GO:0006096">
    <property type="term" value="P:glycolytic process"/>
    <property type="evidence" value="ECO:0007669"/>
    <property type="project" value="UniProtKB-UniRule"/>
</dbReference>
<dbReference type="CDD" id="cd00311">
    <property type="entry name" value="TIM"/>
    <property type="match status" value="1"/>
</dbReference>
<dbReference type="FunFam" id="3.20.20.70:FF:000016">
    <property type="entry name" value="Triosephosphate isomerase"/>
    <property type="match status" value="1"/>
</dbReference>
<dbReference type="Gene3D" id="3.20.20.70">
    <property type="entry name" value="Aldolase class I"/>
    <property type="match status" value="1"/>
</dbReference>
<dbReference type="HAMAP" id="MF_00147_B">
    <property type="entry name" value="TIM_B"/>
    <property type="match status" value="1"/>
</dbReference>
<dbReference type="InterPro" id="IPR013785">
    <property type="entry name" value="Aldolase_TIM"/>
</dbReference>
<dbReference type="InterPro" id="IPR035990">
    <property type="entry name" value="TIM_sf"/>
</dbReference>
<dbReference type="InterPro" id="IPR022896">
    <property type="entry name" value="TrioseP_Isoase_bac/euk"/>
</dbReference>
<dbReference type="InterPro" id="IPR000652">
    <property type="entry name" value="Triosephosphate_isomerase"/>
</dbReference>
<dbReference type="InterPro" id="IPR020861">
    <property type="entry name" value="Triosephosphate_isomerase_AS"/>
</dbReference>
<dbReference type="NCBIfam" id="TIGR00419">
    <property type="entry name" value="tim"/>
    <property type="match status" value="1"/>
</dbReference>
<dbReference type="PANTHER" id="PTHR21139">
    <property type="entry name" value="TRIOSEPHOSPHATE ISOMERASE"/>
    <property type="match status" value="1"/>
</dbReference>
<dbReference type="PANTHER" id="PTHR21139:SF42">
    <property type="entry name" value="TRIOSEPHOSPHATE ISOMERASE"/>
    <property type="match status" value="1"/>
</dbReference>
<dbReference type="Pfam" id="PF00121">
    <property type="entry name" value="TIM"/>
    <property type="match status" value="1"/>
</dbReference>
<dbReference type="SUPFAM" id="SSF51351">
    <property type="entry name" value="Triosephosphate isomerase (TIM)"/>
    <property type="match status" value="1"/>
</dbReference>
<dbReference type="PROSITE" id="PS00171">
    <property type="entry name" value="TIM_1"/>
    <property type="match status" value="1"/>
</dbReference>
<dbReference type="PROSITE" id="PS51440">
    <property type="entry name" value="TIM_2"/>
    <property type="match status" value="1"/>
</dbReference>
<proteinExistence type="inferred from homology"/>
<accession>Q086H6</accession>
<protein>
    <recommendedName>
        <fullName evidence="1">Triosephosphate isomerase</fullName>
        <shortName evidence="1">TIM</shortName>
        <shortName evidence="1">TPI</shortName>
        <ecNumber evidence="1">5.3.1.1</ecNumber>
    </recommendedName>
    <alternativeName>
        <fullName evidence="1">Triose-phosphate isomerase</fullName>
    </alternativeName>
</protein>
<reference key="1">
    <citation type="submission" date="2006-08" db="EMBL/GenBank/DDBJ databases">
        <title>Complete sequence of Shewanella frigidimarina NCIMB 400.</title>
        <authorList>
            <consortium name="US DOE Joint Genome Institute"/>
            <person name="Copeland A."/>
            <person name="Lucas S."/>
            <person name="Lapidus A."/>
            <person name="Barry K."/>
            <person name="Detter J.C."/>
            <person name="Glavina del Rio T."/>
            <person name="Hammon N."/>
            <person name="Israni S."/>
            <person name="Dalin E."/>
            <person name="Tice H."/>
            <person name="Pitluck S."/>
            <person name="Fredrickson J.K."/>
            <person name="Kolker E."/>
            <person name="McCuel L.A."/>
            <person name="DiChristina T."/>
            <person name="Nealson K.H."/>
            <person name="Newman D."/>
            <person name="Tiedje J.M."/>
            <person name="Zhou J."/>
            <person name="Romine M.F."/>
            <person name="Culley D.E."/>
            <person name="Serres M."/>
            <person name="Chertkov O."/>
            <person name="Brettin T."/>
            <person name="Bruce D."/>
            <person name="Han C."/>
            <person name="Tapia R."/>
            <person name="Gilna P."/>
            <person name="Schmutz J."/>
            <person name="Larimer F."/>
            <person name="Land M."/>
            <person name="Hauser L."/>
            <person name="Kyrpides N."/>
            <person name="Mikhailova N."/>
            <person name="Richardson P."/>
        </authorList>
    </citation>
    <scope>NUCLEOTIDE SEQUENCE [LARGE SCALE GENOMIC DNA]</scope>
    <source>
        <strain>NCIMB 400</strain>
    </source>
</reference>
<feature type="chain" id="PRO_0000307554" description="Triosephosphate isomerase">
    <location>
        <begin position="1"/>
        <end position="260"/>
    </location>
</feature>
<feature type="active site" description="Electrophile" evidence="1">
    <location>
        <position position="103"/>
    </location>
</feature>
<feature type="active site" description="Proton acceptor" evidence="1">
    <location>
        <position position="175"/>
    </location>
</feature>
<feature type="binding site" evidence="1">
    <location>
        <begin position="11"/>
        <end position="13"/>
    </location>
    <ligand>
        <name>substrate</name>
    </ligand>
</feature>
<feature type="binding site" evidence="1">
    <location>
        <position position="181"/>
    </location>
    <ligand>
        <name>substrate</name>
    </ligand>
</feature>
<feature type="binding site" evidence="1">
    <location>
        <position position="220"/>
    </location>
    <ligand>
        <name>substrate</name>
    </ligand>
</feature>
<feature type="binding site" evidence="1">
    <location>
        <begin position="241"/>
        <end position="242"/>
    </location>
    <ligand>
        <name>substrate</name>
    </ligand>
</feature>